<proteinExistence type="inferred from homology"/>
<accession>A5CYR8</accession>
<feature type="chain" id="PRO_1000079303" description="UPF0145 protein PTH_2690">
    <location>
        <begin position="1"/>
        <end position="103"/>
    </location>
</feature>
<organism>
    <name type="scientific">Pelotomaculum thermopropionicum (strain DSM 13744 / JCM 10971 / SI)</name>
    <dbReference type="NCBI Taxonomy" id="370438"/>
    <lineage>
        <taxon>Bacteria</taxon>
        <taxon>Bacillati</taxon>
        <taxon>Bacillota</taxon>
        <taxon>Clostridia</taxon>
        <taxon>Eubacteriales</taxon>
        <taxon>Desulfotomaculaceae</taxon>
        <taxon>Pelotomaculum</taxon>
    </lineage>
</organism>
<dbReference type="EMBL" id="AP009389">
    <property type="protein sequence ID" value="BAF60871.1"/>
    <property type="molecule type" value="Genomic_DNA"/>
</dbReference>
<dbReference type="SMR" id="A5CYR8"/>
<dbReference type="STRING" id="370438.PTH_2690"/>
<dbReference type="KEGG" id="pth:PTH_2690"/>
<dbReference type="eggNOG" id="COG0393">
    <property type="taxonomic scope" value="Bacteria"/>
</dbReference>
<dbReference type="HOGENOM" id="CLU_117144_3_2_9"/>
<dbReference type="Proteomes" id="UP000006556">
    <property type="component" value="Chromosome"/>
</dbReference>
<dbReference type="Gene3D" id="3.30.110.70">
    <property type="entry name" value="Hypothetical protein apc22750. Chain B"/>
    <property type="match status" value="1"/>
</dbReference>
<dbReference type="HAMAP" id="MF_00338">
    <property type="entry name" value="UPF0145"/>
    <property type="match status" value="1"/>
</dbReference>
<dbReference type="InterPro" id="IPR035439">
    <property type="entry name" value="UPF0145_dom_sf"/>
</dbReference>
<dbReference type="InterPro" id="IPR002765">
    <property type="entry name" value="UPF0145_YbjQ-like"/>
</dbReference>
<dbReference type="PANTHER" id="PTHR34068">
    <property type="entry name" value="UPF0145 PROTEIN YBJQ"/>
    <property type="match status" value="1"/>
</dbReference>
<dbReference type="PANTHER" id="PTHR34068:SF1">
    <property type="entry name" value="UPF0145 PROTEIN YBJQ"/>
    <property type="match status" value="1"/>
</dbReference>
<dbReference type="Pfam" id="PF01906">
    <property type="entry name" value="YbjQ_1"/>
    <property type="match status" value="1"/>
</dbReference>
<dbReference type="SUPFAM" id="SSF117782">
    <property type="entry name" value="YbjQ-like"/>
    <property type="match status" value="1"/>
</dbReference>
<keyword id="KW-1185">Reference proteome</keyword>
<reference key="1">
    <citation type="journal article" date="2008" name="Genome Res.">
        <title>The genome of Pelotomaculum thermopropionicum reveals niche-associated evolution in anaerobic microbiota.</title>
        <authorList>
            <person name="Kosaka T."/>
            <person name="Kato S."/>
            <person name="Shimoyama T."/>
            <person name="Ishii S."/>
            <person name="Abe T."/>
            <person name="Watanabe K."/>
        </authorList>
    </citation>
    <scope>NUCLEOTIDE SEQUENCE [LARGE SCALE GENOMIC DNA]</scope>
    <source>
        <strain>DSM 13744 / JCM 10971 / SI</strain>
    </source>
</reference>
<gene>
    <name type="ordered locus">PTH_2690</name>
</gene>
<name>Y2690_PELTS</name>
<sequence>MILTTTPNIEGKPVLEYLGIVTGEAIMGANIVRDFFAAVTDIVGGRSGAYEQKLSHARQIALNEMAEEARRLGANAVVGIDIDYEVVRDGMLMVTASGTAVKI</sequence>
<comment type="similarity">
    <text evidence="1">Belongs to the UPF0145 family.</text>
</comment>
<protein>
    <recommendedName>
        <fullName evidence="1">UPF0145 protein PTH_2690</fullName>
    </recommendedName>
</protein>
<evidence type="ECO:0000255" key="1">
    <source>
        <dbReference type="HAMAP-Rule" id="MF_00338"/>
    </source>
</evidence>